<gene>
    <name evidence="1" type="primary">ligA</name>
    <name type="ordered locus">SRU_0888</name>
</gene>
<reference key="1">
    <citation type="journal article" date="2005" name="Proc. Natl. Acad. Sci. U.S.A.">
        <title>The genome of Salinibacter ruber: convergence and gene exchange among hyperhalophilic bacteria and archaea.</title>
        <authorList>
            <person name="Mongodin E.F."/>
            <person name="Nelson K.E."/>
            <person name="Daugherty S."/>
            <person name="DeBoy R.T."/>
            <person name="Wister J."/>
            <person name="Khouri H."/>
            <person name="Weidman J."/>
            <person name="Walsh D.A."/>
            <person name="Papke R.T."/>
            <person name="Sanchez Perez G."/>
            <person name="Sharma A.K."/>
            <person name="Nesbo C.L."/>
            <person name="MacLeod D."/>
            <person name="Bapteste E."/>
            <person name="Doolittle W.F."/>
            <person name="Charlebois R.L."/>
            <person name="Legault B."/>
            <person name="Rodriguez-Valera F."/>
        </authorList>
    </citation>
    <scope>NUCLEOTIDE SEQUENCE [LARGE SCALE GENOMIC DNA]</scope>
    <source>
        <strain>DSM 13855 / CECT 5946 / M31</strain>
    </source>
</reference>
<keyword id="KW-0227">DNA damage</keyword>
<keyword id="KW-0234">DNA repair</keyword>
<keyword id="KW-0235">DNA replication</keyword>
<keyword id="KW-0436">Ligase</keyword>
<keyword id="KW-0460">Magnesium</keyword>
<keyword id="KW-0464">Manganese</keyword>
<keyword id="KW-0479">Metal-binding</keyword>
<keyword id="KW-0520">NAD</keyword>
<keyword id="KW-1185">Reference proteome</keyword>
<keyword id="KW-0862">Zinc</keyword>
<comment type="function">
    <text evidence="1">DNA ligase that catalyzes the formation of phosphodiester linkages between 5'-phosphoryl and 3'-hydroxyl groups in double-stranded DNA using NAD as a coenzyme and as the energy source for the reaction. It is essential for DNA replication and repair of damaged DNA.</text>
</comment>
<comment type="catalytic activity">
    <reaction evidence="1">
        <text>NAD(+) + (deoxyribonucleotide)n-3'-hydroxyl + 5'-phospho-(deoxyribonucleotide)m = (deoxyribonucleotide)n+m + AMP + beta-nicotinamide D-nucleotide.</text>
        <dbReference type="EC" id="6.5.1.2"/>
    </reaction>
</comment>
<comment type="cofactor">
    <cofactor evidence="1">
        <name>Mg(2+)</name>
        <dbReference type="ChEBI" id="CHEBI:18420"/>
    </cofactor>
    <cofactor evidence="1">
        <name>Mn(2+)</name>
        <dbReference type="ChEBI" id="CHEBI:29035"/>
    </cofactor>
</comment>
<comment type="similarity">
    <text evidence="1">Belongs to the NAD-dependent DNA ligase family. LigA subfamily.</text>
</comment>
<accession>Q2S459</accession>
<protein>
    <recommendedName>
        <fullName evidence="1">DNA ligase</fullName>
        <ecNumber evidence="1">6.5.1.2</ecNumber>
    </recommendedName>
    <alternativeName>
        <fullName evidence="1">Polydeoxyribonucleotide synthase [NAD(+)]</fullName>
    </alternativeName>
</protein>
<feature type="chain" id="PRO_0000313417" description="DNA ligase">
    <location>
        <begin position="1"/>
        <end position="690"/>
    </location>
</feature>
<feature type="domain" description="BRCT" evidence="1">
    <location>
        <begin position="607"/>
        <end position="690"/>
    </location>
</feature>
<feature type="active site" description="N6-AMP-lysine intermediate" evidence="1">
    <location>
        <position position="131"/>
    </location>
</feature>
<feature type="binding site" evidence="1">
    <location>
        <begin position="49"/>
        <end position="53"/>
    </location>
    <ligand>
        <name>NAD(+)</name>
        <dbReference type="ChEBI" id="CHEBI:57540"/>
    </ligand>
</feature>
<feature type="binding site" evidence="1">
    <location>
        <begin position="98"/>
        <end position="99"/>
    </location>
    <ligand>
        <name>NAD(+)</name>
        <dbReference type="ChEBI" id="CHEBI:57540"/>
    </ligand>
</feature>
<feature type="binding site" evidence="1">
    <location>
        <position position="129"/>
    </location>
    <ligand>
        <name>NAD(+)</name>
        <dbReference type="ChEBI" id="CHEBI:57540"/>
    </ligand>
</feature>
<feature type="binding site" evidence="1">
    <location>
        <position position="152"/>
    </location>
    <ligand>
        <name>NAD(+)</name>
        <dbReference type="ChEBI" id="CHEBI:57540"/>
    </ligand>
</feature>
<feature type="binding site" evidence="1">
    <location>
        <position position="191"/>
    </location>
    <ligand>
        <name>NAD(+)</name>
        <dbReference type="ChEBI" id="CHEBI:57540"/>
    </ligand>
</feature>
<feature type="binding site" evidence="1">
    <location>
        <position position="308"/>
    </location>
    <ligand>
        <name>NAD(+)</name>
        <dbReference type="ChEBI" id="CHEBI:57540"/>
    </ligand>
</feature>
<feature type="binding site" evidence="1">
    <location>
        <position position="332"/>
    </location>
    <ligand>
        <name>NAD(+)</name>
        <dbReference type="ChEBI" id="CHEBI:57540"/>
    </ligand>
</feature>
<feature type="binding site" evidence="1">
    <location>
        <position position="426"/>
    </location>
    <ligand>
        <name>Zn(2+)</name>
        <dbReference type="ChEBI" id="CHEBI:29105"/>
    </ligand>
</feature>
<feature type="binding site" evidence="1">
    <location>
        <position position="429"/>
    </location>
    <ligand>
        <name>Zn(2+)</name>
        <dbReference type="ChEBI" id="CHEBI:29105"/>
    </ligand>
</feature>
<feature type="binding site" evidence="1">
    <location>
        <position position="444"/>
    </location>
    <ligand>
        <name>Zn(2+)</name>
        <dbReference type="ChEBI" id="CHEBI:29105"/>
    </ligand>
</feature>
<feature type="binding site" evidence="1">
    <location>
        <position position="450"/>
    </location>
    <ligand>
        <name>Zn(2+)</name>
        <dbReference type="ChEBI" id="CHEBI:29105"/>
    </ligand>
</feature>
<name>DNLJ_SALRD</name>
<dbReference type="EC" id="6.5.1.2" evidence="1"/>
<dbReference type="EMBL" id="CP000159">
    <property type="protein sequence ID" value="ABC46104.1"/>
    <property type="molecule type" value="Genomic_DNA"/>
</dbReference>
<dbReference type="RefSeq" id="WP_011403650.1">
    <property type="nucleotide sequence ID" value="NC_007677.1"/>
</dbReference>
<dbReference type="RefSeq" id="YP_445022.1">
    <property type="nucleotide sequence ID" value="NC_007677.1"/>
</dbReference>
<dbReference type="SMR" id="Q2S459"/>
<dbReference type="STRING" id="309807.SRU_0888"/>
<dbReference type="EnsemblBacteria" id="ABC46104">
    <property type="protein sequence ID" value="ABC46104"/>
    <property type="gene ID" value="SRU_0888"/>
</dbReference>
<dbReference type="KEGG" id="sru:SRU_0888"/>
<dbReference type="PATRIC" id="fig|309807.25.peg.918"/>
<dbReference type="eggNOG" id="COG0272">
    <property type="taxonomic scope" value="Bacteria"/>
</dbReference>
<dbReference type="HOGENOM" id="CLU_007764_2_1_10"/>
<dbReference type="OrthoDB" id="9759736at2"/>
<dbReference type="Proteomes" id="UP000008674">
    <property type="component" value="Chromosome"/>
</dbReference>
<dbReference type="GO" id="GO:0005829">
    <property type="term" value="C:cytosol"/>
    <property type="evidence" value="ECO:0007669"/>
    <property type="project" value="TreeGrafter"/>
</dbReference>
<dbReference type="GO" id="GO:0003677">
    <property type="term" value="F:DNA binding"/>
    <property type="evidence" value="ECO:0007669"/>
    <property type="project" value="InterPro"/>
</dbReference>
<dbReference type="GO" id="GO:0003911">
    <property type="term" value="F:DNA ligase (NAD+) activity"/>
    <property type="evidence" value="ECO:0007669"/>
    <property type="project" value="UniProtKB-UniRule"/>
</dbReference>
<dbReference type="GO" id="GO:0046872">
    <property type="term" value="F:metal ion binding"/>
    <property type="evidence" value="ECO:0007669"/>
    <property type="project" value="UniProtKB-KW"/>
</dbReference>
<dbReference type="GO" id="GO:0006281">
    <property type="term" value="P:DNA repair"/>
    <property type="evidence" value="ECO:0007669"/>
    <property type="project" value="UniProtKB-KW"/>
</dbReference>
<dbReference type="GO" id="GO:0006260">
    <property type="term" value="P:DNA replication"/>
    <property type="evidence" value="ECO:0007669"/>
    <property type="project" value="UniProtKB-KW"/>
</dbReference>
<dbReference type="CDD" id="cd17748">
    <property type="entry name" value="BRCT_DNA_ligase_like"/>
    <property type="match status" value="1"/>
</dbReference>
<dbReference type="CDD" id="cd00114">
    <property type="entry name" value="LIGANc"/>
    <property type="match status" value="1"/>
</dbReference>
<dbReference type="FunFam" id="1.10.150.20:FF:000006">
    <property type="entry name" value="DNA ligase"/>
    <property type="match status" value="1"/>
</dbReference>
<dbReference type="FunFam" id="1.10.150.20:FF:000007">
    <property type="entry name" value="DNA ligase"/>
    <property type="match status" value="1"/>
</dbReference>
<dbReference type="FunFam" id="1.10.287.610:FF:000002">
    <property type="entry name" value="DNA ligase"/>
    <property type="match status" value="1"/>
</dbReference>
<dbReference type="FunFam" id="2.40.50.140:FF:000012">
    <property type="entry name" value="DNA ligase"/>
    <property type="match status" value="1"/>
</dbReference>
<dbReference type="FunFam" id="3.30.470.30:FF:000001">
    <property type="entry name" value="DNA ligase"/>
    <property type="match status" value="1"/>
</dbReference>
<dbReference type="Gene3D" id="6.20.10.30">
    <property type="match status" value="1"/>
</dbReference>
<dbReference type="Gene3D" id="1.10.150.20">
    <property type="entry name" value="5' to 3' exonuclease, C-terminal subdomain"/>
    <property type="match status" value="2"/>
</dbReference>
<dbReference type="Gene3D" id="3.40.50.10190">
    <property type="entry name" value="BRCT domain"/>
    <property type="match status" value="1"/>
</dbReference>
<dbReference type="Gene3D" id="3.30.470.30">
    <property type="entry name" value="DNA ligase/mRNA capping enzyme"/>
    <property type="match status" value="1"/>
</dbReference>
<dbReference type="Gene3D" id="1.10.287.610">
    <property type="entry name" value="Helix hairpin bin"/>
    <property type="match status" value="1"/>
</dbReference>
<dbReference type="Gene3D" id="2.40.50.140">
    <property type="entry name" value="Nucleic acid-binding proteins"/>
    <property type="match status" value="1"/>
</dbReference>
<dbReference type="HAMAP" id="MF_01588">
    <property type="entry name" value="DNA_ligase_A"/>
    <property type="match status" value="1"/>
</dbReference>
<dbReference type="InterPro" id="IPR001357">
    <property type="entry name" value="BRCT_dom"/>
</dbReference>
<dbReference type="InterPro" id="IPR036420">
    <property type="entry name" value="BRCT_dom_sf"/>
</dbReference>
<dbReference type="InterPro" id="IPR041663">
    <property type="entry name" value="DisA/LigA_HHH"/>
</dbReference>
<dbReference type="InterPro" id="IPR001679">
    <property type="entry name" value="DNA_ligase"/>
</dbReference>
<dbReference type="InterPro" id="IPR018239">
    <property type="entry name" value="DNA_ligase_AS"/>
</dbReference>
<dbReference type="InterPro" id="IPR033136">
    <property type="entry name" value="DNA_ligase_CS"/>
</dbReference>
<dbReference type="InterPro" id="IPR013839">
    <property type="entry name" value="DNAligase_adenylation"/>
</dbReference>
<dbReference type="InterPro" id="IPR013840">
    <property type="entry name" value="DNAligase_N"/>
</dbReference>
<dbReference type="InterPro" id="IPR003583">
    <property type="entry name" value="Hlx-hairpin-Hlx_DNA-bd_motif"/>
</dbReference>
<dbReference type="InterPro" id="IPR012340">
    <property type="entry name" value="NA-bd_OB-fold"/>
</dbReference>
<dbReference type="InterPro" id="IPR004150">
    <property type="entry name" value="NAD_DNA_ligase_OB"/>
</dbReference>
<dbReference type="InterPro" id="IPR010994">
    <property type="entry name" value="RuvA_2-like"/>
</dbReference>
<dbReference type="InterPro" id="IPR004149">
    <property type="entry name" value="Znf_DNAligase_C4"/>
</dbReference>
<dbReference type="NCBIfam" id="TIGR00575">
    <property type="entry name" value="dnlj"/>
    <property type="match status" value="1"/>
</dbReference>
<dbReference type="NCBIfam" id="NF005932">
    <property type="entry name" value="PRK07956.1"/>
    <property type="match status" value="1"/>
</dbReference>
<dbReference type="PANTHER" id="PTHR23389">
    <property type="entry name" value="CHROMOSOME TRANSMISSION FIDELITY FACTOR 18"/>
    <property type="match status" value="1"/>
</dbReference>
<dbReference type="PANTHER" id="PTHR23389:SF9">
    <property type="entry name" value="DNA LIGASE"/>
    <property type="match status" value="1"/>
</dbReference>
<dbReference type="Pfam" id="PF00533">
    <property type="entry name" value="BRCT"/>
    <property type="match status" value="1"/>
</dbReference>
<dbReference type="Pfam" id="PF01653">
    <property type="entry name" value="DNA_ligase_aden"/>
    <property type="match status" value="1"/>
</dbReference>
<dbReference type="Pfam" id="PF03120">
    <property type="entry name" value="DNA_ligase_OB"/>
    <property type="match status" value="1"/>
</dbReference>
<dbReference type="Pfam" id="PF03119">
    <property type="entry name" value="DNA_ligase_ZBD"/>
    <property type="match status" value="1"/>
</dbReference>
<dbReference type="Pfam" id="PF12826">
    <property type="entry name" value="HHH_2"/>
    <property type="match status" value="1"/>
</dbReference>
<dbReference type="Pfam" id="PF14520">
    <property type="entry name" value="HHH_5"/>
    <property type="match status" value="1"/>
</dbReference>
<dbReference type="Pfam" id="PF22745">
    <property type="entry name" value="Nlig-Ia"/>
    <property type="match status" value="1"/>
</dbReference>
<dbReference type="PIRSF" id="PIRSF001604">
    <property type="entry name" value="LigA"/>
    <property type="match status" value="1"/>
</dbReference>
<dbReference type="SMART" id="SM00292">
    <property type="entry name" value="BRCT"/>
    <property type="match status" value="1"/>
</dbReference>
<dbReference type="SMART" id="SM00278">
    <property type="entry name" value="HhH1"/>
    <property type="match status" value="4"/>
</dbReference>
<dbReference type="SMART" id="SM00532">
    <property type="entry name" value="LIGANc"/>
    <property type="match status" value="1"/>
</dbReference>
<dbReference type="SUPFAM" id="SSF52113">
    <property type="entry name" value="BRCT domain"/>
    <property type="match status" value="1"/>
</dbReference>
<dbReference type="SUPFAM" id="SSF56091">
    <property type="entry name" value="DNA ligase/mRNA capping enzyme, catalytic domain"/>
    <property type="match status" value="1"/>
</dbReference>
<dbReference type="SUPFAM" id="SSF50249">
    <property type="entry name" value="Nucleic acid-binding proteins"/>
    <property type="match status" value="1"/>
</dbReference>
<dbReference type="SUPFAM" id="SSF47781">
    <property type="entry name" value="RuvA domain 2-like"/>
    <property type="match status" value="1"/>
</dbReference>
<dbReference type="PROSITE" id="PS50172">
    <property type="entry name" value="BRCT"/>
    <property type="match status" value="1"/>
</dbReference>
<dbReference type="PROSITE" id="PS01055">
    <property type="entry name" value="DNA_LIGASE_N1"/>
    <property type="match status" value="1"/>
</dbReference>
<dbReference type="PROSITE" id="PS01056">
    <property type="entry name" value="DNA_LIGASE_N2"/>
    <property type="match status" value="1"/>
</dbReference>
<organism>
    <name type="scientific">Salinibacter ruber (strain DSM 13855 / M31)</name>
    <dbReference type="NCBI Taxonomy" id="309807"/>
    <lineage>
        <taxon>Bacteria</taxon>
        <taxon>Pseudomonadati</taxon>
        <taxon>Rhodothermota</taxon>
        <taxon>Rhodothermia</taxon>
        <taxon>Rhodothermales</taxon>
        <taxon>Salinibacteraceae</taxon>
        <taxon>Salinibacter</taxon>
    </lineage>
</organism>
<proteinExistence type="inferred from homology"/>
<sequence>MPDVDPTPDLDLEAIDSEPAAAEAAEQLRAALRHHNYRYYVLDAPVVSDAEYDRLFQQLQTLEAEYPVLQTPDSPTHQVGGPVRDELGTVTHPAPMLSLKAVYEEDEVRNFAETCREELGRETVTYIAEPKFDGLAVELIYEDGRLVQGATRGDGETGEEITANVKTIKGVPLRLRDDARPVPDRLVVRGEAYMRKDEFNAFNRRREEEGKKVFANPRNAAAGSLRQLDSNITARRPLRIYFYEIAPVDGRDFATHAEVLEALPEWGLRVCEDHIRRCDGIDAALAHHAALVDRRDDLPYEIDGLVIKVNDFDGHETLGVRDRDPRWAAAYKFPPRRATTSIEDLFVQVGRTGRITPVAVLAPVEVGGVEVTRASLHNQNEIDRKDIRIGDTVLIERAGDVIPQVVKVIEDERDGTEAPYHIPDACPVCGSEVVLSDDKKQAFCTGGMTCPAQFRERLKHYASREATDIEGLGDKRAEQLIDAGLIQTISDLYELEKADLLQLERYADKSAQNLIDEIEASLEQDLDRFLYALGIPLVGSATARLLAQHFDTLDALVDADEDALTTIDDIGPEVAHSIATFFADDANRGVIDEMRDAGLTLTNPYAEDAARLEGLTFVFTGSLEGWTRSAVQRFVEQHGANATSSVSGNTDYVVAGPGAGSKRDDADDRGIPVLDEDAFHALLREQGIDA</sequence>
<evidence type="ECO:0000255" key="1">
    <source>
        <dbReference type="HAMAP-Rule" id="MF_01588"/>
    </source>
</evidence>